<comment type="function">
    <text evidence="1">Required for the formation of a threonylcarbamoyl group on adenosine at position 37 (t(6)A37) in tRNAs that read codons beginning with adenine. Is a component of the KEOPS complex that is probably involved in the transfer of the threonylcarbamoyl moiety of threonylcarbamoyl-AMP (TC-AMP) to the N6 group of A37. The Kae1 domain likely plays a direct catalytic role in this reaction. The Bud32 domain probably displays kinase activity that regulates Kae1 function.</text>
</comment>
<comment type="catalytic activity">
    <reaction evidence="1">
        <text>L-seryl-[protein] + ATP = O-phospho-L-seryl-[protein] + ADP + H(+)</text>
        <dbReference type="Rhea" id="RHEA:17989"/>
        <dbReference type="Rhea" id="RHEA-COMP:9863"/>
        <dbReference type="Rhea" id="RHEA-COMP:11604"/>
        <dbReference type="ChEBI" id="CHEBI:15378"/>
        <dbReference type="ChEBI" id="CHEBI:29999"/>
        <dbReference type="ChEBI" id="CHEBI:30616"/>
        <dbReference type="ChEBI" id="CHEBI:83421"/>
        <dbReference type="ChEBI" id="CHEBI:456216"/>
        <dbReference type="EC" id="2.7.11.1"/>
    </reaction>
</comment>
<comment type="catalytic activity">
    <reaction evidence="1">
        <text>L-threonyl-[protein] + ATP = O-phospho-L-threonyl-[protein] + ADP + H(+)</text>
        <dbReference type="Rhea" id="RHEA:46608"/>
        <dbReference type="Rhea" id="RHEA-COMP:11060"/>
        <dbReference type="Rhea" id="RHEA-COMP:11605"/>
        <dbReference type="ChEBI" id="CHEBI:15378"/>
        <dbReference type="ChEBI" id="CHEBI:30013"/>
        <dbReference type="ChEBI" id="CHEBI:30616"/>
        <dbReference type="ChEBI" id="CHEBI:61977"/>
        <dbReference type="ChEBI" id="CHEBI:456216"/>
        <dbReference type="EC" id="2.7.11.1"/>
    </reaction>
</comment>
<comment type="catalytic activity">
    <reaction evidence="1">
        <text>L-threonylcarbamoyladenylate + adenosine(37) in tRNA = N(6)-L-threonylcarbamoyladenosine(37) in tRNA + AMP + H(+)</text>
        <dbReference type="Rhea" id="RHEA:37059"/>
        <dbReference type="Rhea" id="RHEA-COMP:10162"/>
        <dbReference type="Rhea" id="RHEA-COMP:10163"/>
        <dbReference type="ChEBI" id="CHEBI:15378"/>
        <dbReference type="ChEBI" id="CHEBI:73682"/>
        <dbReference type="ChEBI" id="CHEBI:74411"/>
        <dbReference type="ChEBI" id="CHEBI:74418"/>
        <dbReference type="ChEBI" id="CHEBI:456215"/>
        <dbReference type="EC" id="2.3.1.234"/>
    </reaction>
</comment>
<comment type="cofactor">
    <cofactor evidence="1">
        <name>Fe(2+)</name>
        <dbReference type="ChEBI" id="CHEBI:29033"/>
    </cofactor>
    <text evidence="1">Binds 1 Fe(2+) ion per subunit.</text>
</comment>
<comment type="subunit">
    <text evidence="1">Component of the KEOPS complex that consists of Kae1, Bud32, Cgi121 and Pcc1; the whole complex dimerizes.</text>
</comment>
<comment type="subcellular location">
    <subcellularLocation>
        <location evidence="1">Cytoplasm</location>
    </subcellularLocation>
</comment>
<comment type="similarity">
    <text evidence="1">In the N-terminal section; belongs to the KAE1 / TsaD family.</text>
</comment>
<comment type="similarity">
    <text evidence="1">In the C-terminal section; belongs to the protein kinase superfamily. Tyr protein kinase family. BUD32 subfamily.</text>
</comment>
<accession>Q46FS9</accession>
<keyword id="KW-0012">Acyltransferase</keyword>
<keyword id="KW-0067">ATP-binding</keyword>
<keyword id="KW-0963">Cytoplasm</keyword>
<keyword id="KW-0408">Iron</keyword>
<keyword id="KW-0418">Kinase</keyword>
<keyword id="KW-0479">Metal-binding</keyword>
<keyword id="KW-0511">Multifunctional enzyme</keyword>
<keyword id="KW-0547">Nucleotide-binding</keyword>
<keyword id="KW-0723">Serine/threonine-protein kinase</keyword>
<keyword id="KW-0808">Transferase</keyword>
<keyword id="KW-0819">tRNA processing</keyword>
<organism>
    <name type="scientific">Methanosarcina barkeri (strain Fusaro / DSM 804)</name>
    <dbReference type="NCBI Taxonomy" id="269797"/>
    <lineage>
        <taxon>Archaea</taxon>
        <taxon>Methanobacteriati</taxon>
        <taxon>Methanobacteriota</taxon>
        <taxon>Stenosarchaea group</taxon>
        <taxon>Methanomicrobia</taxon>
        <taxon>Methanosarcinales</taxon>
        <taxon>Methanosarcinaceae</taxon>
        <taxon>Methanosarcina</taxon>
    </lineage>
</organism>
<reference key="1">
    <citation type="journal article" date="2006" name="J. Bacteriol.">
        <title>The Methanosarcina barkeri genome: comparative analysis with Methanosarcina acetivorans and Methanosarcina mazei reveals extensive rearrangement within methanosarcinal genomes.</title>
        <authorList>
            <person name="Maeder D.L."/>
            <person name="Anderson I."/>
            <person name="Brettin T.S."/>
            <person name="Bruce D.C."/>
            <person name="Gilna P."/>
            <person name="Han C.S."/>
            <person name="Lapidus A."/>
            <person name="Metcalf W.W."/>
            <person name="Saunders E."/>
            <person name="Tapia R."/>
            <person name="Sowers K.R."/>
        </authorList>
    </citation>
    <scope>NUCLEOTIDE SEQUENCE [LARGE SCALE GENOMIC DNA]</scope>
    <source>
        <strain>Fusaro / DSM 804</strain>
    </source>
</reference>
<gene>
    <name type="ordered locus">Mbar_A0279</name>
</gene>
<evidence type="ECO:0000255" key="1">
    <source>
        <dbReference type="HAMAP-Rule" id="MF_01447"/>
    </source>
</evidence>
<name>KAE1B_METBF</name>
<feature type="chain" id="PRO_0000303655" description="Probable bifunctional tRNA threonylcarbamoyladenosine biosynthesis protein">
    <location>
        <begin position="1"/>
        <end position="545"/>
    </location>
</feature>
<feature type="domain" description="Protein kinase" evidence="1">
    <location>
        <begin position="340"/>
        <end position="545"/>
    </location>
</feature>
<feature type="region of interest" description="Kae1">
    <location>
        <begin position="1"/>
        <end position="329"/>
    </location>
</feature>
<feature type="active site" description="Proton acceptor; for kinase activity" evidence="1">
    <location>
        <position position="462"/>
    </location>
</feature>
<feature type="binding site" evidence="1">
    <location>
        <position position="113"/>
    </location>
    <ligand>
        <name>Fe cation</name>
        <dbReference type="ChEBI" id="CHEBI:24875"/>
    </ligand>
</feature>
<feature type="binding site" evidence="1">
    <location>
        <position position="117"/>
    </location>
    <ligand>
        <name>Fe cation</name>
        <dbReference type="ChEBI" id="CHEBI:24875"/>
    </ligand>
</feature>
<feature type="binding site" evidence="1">
    <location>
        <begin position="134"/>
        <end position="138"/>
    </location>
    <ligand>
        <name>L-threonylcarbamoyladenylate</name>
        <dbReference type="ChEBI" id="CHEBI:73682"/>
    </ligand>
</feature>
<feature type="binding site" evidence="1">
    <location>
        <position position="134"/>
    </location>
    <ligand>
        <name>Fe cation</name>
        <dbReference type="ChEBI" id="CHEBI:24875"/>
    </ligand>
</feature>
<feature type="binding site" evidence="1">
    <location>
        <position position="166"/>
    </location>
    <ligand>
        <name>L-threonylcarbamoyladenylate</name>
        <dbReference type="ChEBI" id="CHEBI:73682"/>
    </ligand>
</feature>
<feature type="binding site" evidence="1">
    <location>
        <position position="179"/>
    </location>
    <ligand>
        <name>L-threonylcarbamoyladenylate</name>
        <dbReference type="ChEBI" id="CHEBI:73682"/>
    </ligand>
</feature>
<feature type="binding site" evidence="1">
    <location>
        <position position="183"/>
    </location>
    <ligand>
        <name>L-threonylcarbamoyladenylate</name>
        <dbReference type="ChEBI" id="CHEBI:73682"/>
    </ligand>
</feature>
<feature type="binding site" evidence="1">
    <location>
        <position position="262"/>
    </location>
    <ligand>
        <name>L-threonylcarbamoyladenylate</name>
        <dbReference type="ChEBI" id="CHEBI:73682"/>
    </ligand>
</feature>
<feature type="binding site" evidence="1">
    <location>
        <position position="290"/>
    </location>
    <ligand>
        <name>Fe cation</name>
        <dbReference type="ChEBI" id="CHEBI:24875"/>
    </ligand>
</feature>
<feature type="binding site" evidence="1">
    <location>
        <begin position="353"/>
        <end position="361"/>
    </location>
    <ligand>
        <name>ATP</name>
        <dbReference type="ChEBI" id="CHEBI:30616"/>
    </ligand>
</feature>
<feature type="binding site" evidence="1">
    <location>
        <position position="375"/>
    </location>
    <ligand>
        <name>ATP</name>
        <dbReference type="ChEBI" id="CHEBI:30616"/>
    </ligand>
</feature>
<proteinExistence type="inferred from homology"/>
<protein>
    <recommendedName>
        <fullName evidence="1">Probable bifunctional tRNA threonylcarbamoyladenosine biosynthesis protein</fullName>
    </recommendedName>
    <domain>
        <recommendedName>
            <fullName evidence="1">tRNA N6-adenosine threonylcarbamoyltransferase</fullName>
            <ecNumber evidence="1">2.3.1.234</ecNumber>
        </recommendedName>
        <alternativeName>
            <fullName>N6-L-threonylcarbamoyladenine synthase</fullName>
            <shortName>t(6)A synthase</shortName>
        </alternativeName>
        <alternativeName>
            <fullName evidence="1">t(6)A37 threonylcarbamoyladenosine biosynthesis protein Kae1</fullName>
        </alternativeName>
        <alternativeName>
            <fullName evidence="1">tRNA threonylcarbamoyladenosine biosynthesis protein Kae1</fullName>
        </alternativeName>
    </domain>
    <domain>
        <recommendedName>
            <fullName evidence="1">Serine/threonine-protein kinase Bud32</fullName>
            <ecNumber evidence="1">2.7.11.1</ecNumber>
        </recommendedName>
    </domain>
</protein>
<dbReference type="EC" id="2.3.1.234" evidence="1"/>
<dbReference type="EC" id="2.7.11.1" evidence="1"/>
<dbReference type="EMBL" id="CP000099">
    <property type="protein sequence ID" value="AAZ69263.1"/>
    <property type="molecule type" value="Genomic_DNA"/>
</dbReference>
<dbReference type="SMR" id="Q46FS9"/>
<dbReference type="STRING" id="269797.Mbar_A0279"/>
<dbReference type="PaxDb" id="269797-Mbar_A0279"/>
<dbReference type="KEGG" id="mba:Mbar_A0279"/>
<dbReference type="eggNOG" id="arCOG01183">
    <property type="taxonomic scope" value="Archaea"/>
</dbReference>
<dbReference type="eggNOG" id="arCOG01185">
    <property type="taxonomic scope" value="Archaea"/>
</dbReference>
<dbReference type="HOGENOM" id="CLU_023208_2_2_2"/>
<dbReference type="OrthoDB" id="6818at2157"/>
<dbReference type="GO" id="GO:0005737">
    <property type="term" value="C:cytoplasm"/>
    <property type="evidence" value="ECO:0007669"/>
    <property type="project" value="UniProtKB-SubCell"/>
</dbReference>
<dbReference type="GO" id="GO:0000408">
    <property type="term" value="C:EKC/KEOPS complex"/>
    <property type="evidence" value="ECO:0007669"/>
    <property type="project" value="InterPro"/>
</dbReference>
<dbReference type="GO" id="GO:0005524">
    <property type="term" value="F:ATP binding"/>
    <property type="evidence" value="ECO:0007669"/>
    <property type="project" value="UniProtKB-UniRule"/>
</dbReference>
<dbReference type="GO" id="GO:0005506">
    <property type="term" value="F:iron ion binding"/>
    <property type="evidence" value="ECO:0007669"/>
    <property type="project" value="UniProtKB-UniRule"/>
</dbReference>
<dbReference type="GO" id="GO:0004222">
    <property type="term" value="F:metalloendopeptidase activity"/>
    <property type="evidence" value="ECO:0007669"/>
    <property type="project" value="InterPro"/>
</dbReference>
<dbReference type="GO" id="GO:0061711">
    <property type="term" value="F:N(6)-L-threonylcarbamoyladenine synthase activity"/>
    <property type="evidence" value="ECO:0007669"/>
    <property type="project" value="UniProtKB-EC"/>
</dbReference>
<dbReference type="GO" id="GO:0106310">
    <property type="term" value="F:protein serine kinase activity"/>
    <property type="evidence" value="ECO:0007669"/>
    <property type="project" value="RHEA"/>
</dbReference>
<dbReference type="GO" id="GO:0004674">
    <property type="term" value="F:protein serine/threonine kinase activity"/>
    <property type="evidence" value="ECO:0007669"/>
    <property type="project" value="UniProtKB-KW"/>
</dbReference>
<dbReference type="GO" id="GO:0004712">
    <property type="term" value="F:protein serine/threonine/tyrosine kinase activity"/>
    <property type="evidence" value="ECO:0007669"/>
    <property type="project" value="UniProtKB-UniRule"/>
</dbReference>
<dbReference type="GO" id="GO:0008270">
    <property type="term" value="F:zinc ion binding"/>
    <property type="evidence" value="ECO:0007669"/>
    <property type="project" value="InterPro"/>
</dbReference>
<dbReference type="GO" id="GO:0002949">
    <property type="term" value="P:tRNA threonylcarbamoyladenosine modification"/>
    <property type="evidence" value="ECO:0007669"/>
    <property type="project" value="UniProtKB-UniRule"/>
</dbReference>
<dbReference type="CDD" id="cd24131">
    <property type="entry name" value="ASKHA_NBD_Kae1_arch_bac"/>
    <property type="match status" value="1"/>
</dbReference>
<dbReference type="FunFam" id="3.30.420.40:FF:000284">
    <property type="entry name" value="Probable bifunctional tRNA threonylcarbamoyladenosine biosynthesis protein"/>
    <property type="match status" value="1"/>
</dbReference>
<dbReference type="Gene3D" id="3.30.420.40">
    <property type="match status" value="2"/>
</dbReference>
<dbReference type="Gene3D" id="3.30.200.20">
    <property type="entry name" value="Phosphorylase Kinase, domain 1"/>
    <property type="match status" value="1"/>
</dbReference>
<dbReference type="Gene3D" id="1.10.510.10">
    <property type="entry name" value="Transferase(Phosphotransferase) domain 1"/>
    <property type="match status" value="1"/>
</dbReference>
<dbReference type="HAMAP" id="MF_01446">
    <property type="entry name" value="Kae1"/>
    <property type="match status" value="1"/>
</dbReference>
<dbReference type="HAMAP" id="MF_01447">
    <property type="entry name" value="Kae1_Bud32_arch"/>
    <property type="match status" value="1"/>
</dbReference>
<dbReference type="InterPro" id="IPR043129">
    <property type="entry name" value="ATPase_NBD"/>
</dbReference>
<dbReference type="InterPro" id="IPR022495">
    <property type="entry name" value="Bud32"/>
</dbReference>
<dbReference type="InterPro" id="IPR000905">
    <property type="entry name" value="Gcp-like_dom"/>
</dbReference>
<dbReference type="InterPro" id="IPR017861">
    <property type="entry name" value="KAE1/TsaD"/>
</dbReference>
<dbReference type="InterPro" id="IPR034680">
    <property type="entry name" value="Kae1_archaea_euk"/>
</dbReference>
<dbReference type="InterPro" id="IPR011009">
    <property type="entry name" value="Kinase-like_dom_sf"/>
</dbReference>
<dbReference type="InterPro" id="IPR000719">
    <property type="entry name" value="Prot_kinase_dom"/>
</dbReference>
<dbReference type="InterPro" id="IPR018934">
    <property type="entry name" value="RIO_dom"/>
</dbReference>
<dbReference type="InterPro" id="IPR009220">
    <property type="entry name" value="tRNA_threonyl_synthase/kinase"/>
</dbReference>
<dbReference type="InterPro" id="IPR008266">
    <property type="entry name" value="Tyr_kinase_AS"/>
</dbReference>
<dbReference type="NCBIfam" id="TIGR03724">
    <property type="entry name" value="arch_bud32"/>
    <property type="match status" value="1"/>
</dbReference>
<dbReference type="NCBIfam" id="TIGR03722">
    <property type="entry name" value="arch_KAE1"/>
    <property type="match status" value="1"/>
</dbReference>
<dbReference type="NCBIfam" id="TIGR00329">
    <property type="entry name" value="gcp_kae1"/>
    <property type="match status" value="1"/>
</dbReference>
<dbReference type="NCBIfam" id="NF007174">
    <property type="entry name" value="PRK09605.1"/>
    <property type="match status" value="1"/>
</dbReference>
<dbReference type="NCBIfam" id="NF011462">
    <property type="entry name" value="PRK14879.1-3"/>
    <property type="match status" value="1"/>
</dbReference>
<dbReference type="PANTHER" id="PTHR11735">
    <property type="entry name" value="TRNA N6-ADENOSINE THREONYLCARBAMOYLTRANSFERASE"/>
    <property type="match status" value="1"/>
</dbReference>
<dbReference type="PANTHER" id="PTHR11735:SF14">
    <property type="entry name" value="TRNA N6-ADENOSINE THREONYLCARBAMOYLTRANSFERASE"/>
    <property type="match status" value="1"/>
</dbReference>
<dbReference type="Pfam" id="PF01163">
    <property type="entry name" value="RIO1"/>
    <property type="match status" value="1"/>
</dbReference>
<dbReference type="Pfam" id="PF00814">
    <property type="entry name" value="TsaD"/>
    <property type="match status" value="1"/>
</dbReference>
<dbReference type="PIRSF" id="PIRSF036401">
    <property type="entry name" value="Gcp_STYKS"/>
    <property type="match status" value="1"/>
</dbReference>
<dbReference type="PRINTS" id="PR00789">
    <property type="entry name" value="OSIALOPTASE"/>
</dbReference>
<dbReference type="SUPFAM" id="SSF53067">
    <property type="entry name" value="Actin-like ATPase domain"/>
    <property type="match status" value="1"/>
</dbReference>
<dbReference type="SUPFAM" id="SSF56112">
    <property type="entry name" value="Protein kinase-like (PK-like)"/>
    <property type="match status" value="1"/>
</dbReference>
<dbReference type="PROSITE" id="PS50011">
    <property type="entry name" value="PROTEIN_KINASE_DOM"/>
    <property type="match status" value="1"/>
</dbReference>
<dbReference type="PROSITE" id="PS00109">
    <property type="entry name" value="PROTEIN_KINASE_TYR"/>
    <property type="match status" value="1"/>
</dbReference>
<sequence>MKNTFILGIEGTAWNLSAAIVTETEIIAEVTETYKPTAGGIHPREAAQHHAKYAASVIKRLLAEAKEKGVKPSDIDGIAFSQGPGLGPCLRTVATAARMLSISLGIPLIGVNHCIAHIEIGIWRTPAMDPVVLYVSGANSQVISYMGGRYRVFGETLDIGLGNALDKFARGANLPHPGGPKIEAYAKNATKYIHLPYVIKGMDLSFSGLSTAASEALKKAPLEDVCYSYQETAFAMVVEVAERALAHTGKKEVLLAGGVGANTRLREMLNDMCEARGAKFYVPEKRFMGDNGTMIAYTGLLMYKSGNTLSLEDSRVNPSYRTDDVKVTWIQEEKMKRVPEISPGTSLKLGELLDNGAEAIVYLEEGPEGKKILVKERVPKAYRYKEIDERIRTERNRTEARLMSESRRHGVSTPIIYDVEDFKLKMQYIDGVPIKYLVTPELSEKVGELVGKLHSAGIVHGDLTTSNILLAGERLYLLDFGLAYYDKGLEARGVDVHVLFQTFESTHRNHEALIEAFKKGYRRTFIDSEDVLTRVEEIKKRARYA</sequence>